<protein>
    <recommendedName>
        <fullName evidence="1">Elongation factor P-like protein</fullName>
    </recommendedName>
</protein>
<accession>A5F1Y2</accession>
<name>EFPL_VIBC3</name>
<sequence length="188" mass="20898">MPKASELKKGFAIISNGKTLLIKDIEVTTPGGRGGSKIYKLRCTDLNTGARVDERYKSDDVLDTVEMNKRPISFSYIDGDEYVFMNNDDYTPYNFKKDEIEDELLFITEEIQGMSVVLVDGEAVAIELPSSVEMVIEETDPSIKGASASSRTKPARMPTGLVVQVPEYIATGDRIVINTAERKFMNRA</sequence>
<dbReference type="EMBL" id="CP000627">
    <property type="protein sequence ID" value="ABQ20883.1"/>
    <property type="status" value="ALT_INIT"/>
    <property type="molecule type" value="Genomic_DNA"/>
</dbReference>
<dbReference type="EMBL" id="CP001235">
    <property type="protein sequence ID" value="ACP09336.1"/>
    <property type="status" value="ALT_INIT"/>
    <property type="molecule type" value="Genomic_DNA"/>
</dbReference>
<dbReference type="SMR" id="A5F1Y2"/>
<dbReference type="KEGG" id="vco:VC0395_A0829"/>
<dbReference type="KEGG" id="vcr:VC395_1328"/>
<dbReference type="PATRIC" id="fig|345073.21.peg.1292"/>
<dbReference type="eggNOG" id="COG0231">
    <property type="taxonomic scope" value="Bacteria"/>
</dbReference>
<dbReference type="HOGENOM" id="CLU_074944_2_0_6"/>
<dbReference type="OrthoDB" id="5599402at2"/>
<dbReference type="Proteomes" id="UP000000249">
    <property type="component" value="Chromosome 2"/>
</dbReference>
<dbReference type="GO" id="GO:0005737">
    <property type="term" value="C:cytoplasm"/>
    <property type="evidence" value="ECO:0007669"/>
    <property type="project" value="InterPro"/>
</dbReference>
<dbReference type="GO" id="GO:0003746">
    <property type="term" value="F:translation elongation factor activity"/>
    <property type="evidence" value="ECO:0007669"/>
    <property type="project" value="UniProtKB-UniRule"/>
</dbReference>
<dbReference type="GO" id="GO:0043043">
    <property type="term" value="P:peptide biosynthetic process"/>
    <property type="evidence" value="ECO:0007669"/>
    <property type="project" value="InterPro"/>
</dbReference>
<dbReference type="CDD" id="cd04470">
    <property type="entry name" value="S1_EF-P_repeat_1"/>
    <property type="match status" value="1"/>
</dbReference>
<dbReference type="CDD" id="cd05794">
    <property type="entry name" value="S1_EF-P_repeat_2"/>
    <property type="match status" value="1"/>
</dbReference>
<dbReference type="FunFam" id="2.40.50.140:FF:000004">
    <property type="entry name" value="Elongation factor P"/>
    <property type="match status" value="1"/>
</dbReference>
<dbReference type="FunFam" id="2.30.30.30:FF:000011">
    <property type="entry name" value="Elongation factor P-like protein"/>
    <property type="match status" value="1"/>
</dbReference>
<dbReference type="Gene3D" id="2.30.30.30">
    <property type="match status" value="1"/>
</dbReference>
<dbReference type="Gene3D" id="2.40.50.140">
    <property type="entry name" value="Nucleic acid-binding proteins"/>
    <property type="match status" value="2"/>
</dbReference>
<dbReference type="HAMAP" id="MF_00646">
    <property type="entry name" value="EFP"/>
    <property type="match status" value="1"/>
</dbReference>
<dbReference type="InterPro" id="IPR015365">
    <property type="entry name" value="Elong-fact-P_C"/>
</dbReference>
<dbReference type="InterPro" id="IPR012340">
    <property type="entry name" value="NA-bd_OB-fold"/>
</dbReference>
<dbReference type="InterPro" id="IPR014722">
    <property type="entry name" value="Rib_uL2_dom2"/>
</dbReference>
<dbReference type="InterPro" id="IPR020599">
    <property type="entry name" value="Transl_elong_fac_P/YeiP"/>
</dbReference>
<dbReference type="InterPro" id="IPR013185">
    <property type="entry name" value="Transl_elong_KOW-like"/>
</dbReference>
<dbReference type="InterPro" id="IPR011897">
    <property type="entry name" value="Transl_elong_p-like_YeiP"/>
</dbReference>
<dbReference type="InterPro" id="IPR001059">
    <property type="entry name" value="Transl_elong_P/YeiP_cen"/>
</dbReference>
<dbReference type="InterPro" id="IPR013852">
    <property type="entry name" value="Transl_elong_P/YeiP_CS"/>
</dbReference>
<dbReference type="InterPro" id="IPR008991">
    <property type="entry name" value="Translation_prot_SH3-like_sf"/>
</dbReference>
<dbReference type="NCBIfam" id="NF001810">
    <property type="entry name" value="PRK00529.1"/>
    <property type="match status" value="1"/>
</dbReference>
<dbReference type="NCBIfam" id="NF003392">
    <property type="entry name" value="PRK04542.1"/>
    <property type="match status" value="1"/>
</dbReference>
<dbReference type="NCBIfam" id="TIGR02178">
    <property type="entry name" value="yeiP"/>
    <property type="match status" value="1"/>
</dbReference>
<dbReference type="PANTHER" id="PTHR30053">
    <property type="entry name" value="ELONGATION FACTOR P"/>
    <property type="match status" value="1"/>
</dbReference>
<dbReference type="PANTHER" id="PTHR30053:SF14">
    <property type="entry name" value="TRANSLATION ELONGATION FACTOR KOW-LIKE DOMAIN-CONTAINING PROTEIN"/>
    <property type="match status" value="1"/>
</dbReference>
<dbReference type="Pfam" id="PF01132">
    <property type="entry name" value="EFP"/>
    <property type="match status" value="1"/>
</dbReference>
<dbReference type="Pfam" id="PF08207">
    <property type="entry name" value="EFP_N"/>
    <property type="match status" value="1"/>
</dbReference>
<dbReference type="Pfam" id="PF09285">
    <property type="entry name" value="Elong-fact-P_C"/>
    <property type="match status" value="1"/>
</dbReference>
<dbReference type="PIRSF" id="PIRSF005901">
    <property type="entry name" value="EF-P"/>
    <property type="match status" value="1"/>
</dbReference>
<dbReference type="SMART" id="SM01185">
    <property type="entry name" value="EFP"/>
    <property type="match status" value="1"/>
</dbReference>
<dbReference type="SMART" id="SM00841">
    <property type="entry name" value="Elong-fact-P_C"/>
    <property type="match status" value="1"/>
</dbReference>
<dbReference type="SUPFAM" id="SSF50249">
    <property type="entry name" value="Nucleic acid-binding proteins"/>
    <property type="match status" value="2"/>
</dbReference>
<dbReference type="SUPFAM" id="SSF50104">
    <property type="entry name" value="Translation proteins SH3-like domain"/>
    <property type="match status" value="1"/>
</dbReference>
<dbReference type="PROSITE" id="PS01275">
    <property type="entry name" value="EFP"/>
    <property type="match status" value="1"/>
</dbReference>
<organism>
    <name type="scientific">Vibrio cholerae serotype O1 (strain ATCC 39541 / Classical Ogawa 395 / O395)</name>
    <dbReference type="NCBI Taxonomy" id="345073"/>
    <lineage>
        <taxon>Bacteria</taxon>
        <taxon>Pseudomonadati</taxon>
        <taxon>Pseudomonadota</taxon>
        <taxon>Gammaproteobacteria</taxon>
        <taxon>Vibrionales</taxon>
        <taxon>Vibrionaceae</taxon>
        <taxon>Vibrio</taxon>
    </lineage>
</organism>
<reference key="1">
    <citation type="submission" date="2007-03" db="EMBL/GenBank/DDBJ databases">
        <authorList>
            <person name="Heidelberg J."/>
        </authorList>
    </citation>
    <scope>NUCLEOTIDE SEQUENCE [LARGE SCALE GENOMIC DNA]</scope>
    <source>
        <strain>ATCC 39541 / Classical Ogawa 395 / O395</strain>
    </source>
</reference>
<reference key="2">
    <citation type="journal article" date="2008" name="PLoS ONE">
        <title>A recalibrated molecular clock and independent origins for the cholera pandemic clones.</title>
        <authorList>
            <person name="Feng L."/>
            <person name="Reeves P.R."/>
            <person name="Lan R."/>
            <person name="Ren Y."/>
            <person name="Gao C."/>
            <person name="Zhou Z."/>
            <person name="Ren Y."/>
            <person name="Cheng J."/>
            <person name="Wang W."/>
            <person name="Wang J."/>
            <person name="Qian W."/>
            <person name="Li D."/>
            <person name="Wang L."/>
        </authorList>
    </citation>
    <scope>NUCLEOTIDE SEQUENCE [LARGE SCALE GENOMIC DNA]</scope>
    <source>
        <strain>ATCC 39541 / Classical Ogawa 395 / O395</strain>
    </source>
</reference>
<gene>
    <name type="ordered locus">VC0395_A0829</name>
    <name type="ordered locus">VC395_1328</name>
</gene>
<comment type="similarity">
    <text evidence="1">Belongs to the elongation factor P family.</text>
</comment>
<comment type="sequence caution" evidence="2">
    <conflict type="erroneous initiation">
        <sequence resource="EMBL-CDS" id="ABQ20883"/>
    </conflict>
</comment>
<comment type="sequence caution" evidence="2">
    <conflict type="erroneous initiation">
        <sequence resource="EMBL-CDS" id="ACP09336"/>
    </conflict>
</comment>
<proteinExistence type="inferred from homology"/>
<feature type="chain" id="PRO_0000384927" description="Elongation factor P-like protein">
    <location>
        <begin position="1"/>
        <end position="188"/>
    </location>
</feature>
<evidence type="ECO:0000255" key="1">
    <source>
        <dbReference type="HAMAP-Rule" id="MF_00646"/>
    </source>
</evidence>
<evidence type="ECO:0000305" key="2"/>